<sequence length="630" mass="70244">MTQTYNADAIEVLTGLEPVRRRPGMYTDTTRPNHLGQEVIDNSVDEALAGHAKRVDVILHADQSLEVIDDGRGMPVDIHPEEGVPAVELILCRLHAGGKFSNKNYQFSGGLHGVGISVVNALSKRVEVNVRRDGQVYNIAFENGEKVQDLQVVGTCGKRNTGTSVHFWPDETFFDSPRFSVSRLTHVLKAKAVLCPGVEITFKDEINNTEQRWCYQDGLNDYLAEAVNGLPTLPEKPFIGNFAGDTEAVDWALLWLPEGGELLTESYVNLIPTMQGGTHVNGLRQGLLDAMREFCEYRNILPRGVKLSAEDIWDRCAYVLSVKMQDPQFAGQTKERLSSRQCAAFVSGVVKDAFILWLNQNVQAAELLAEMAISSAQRRMRAAKKVVRKKLTSGPALPGKLADCTAQDLNRTELFLVEGDSAGGSAKQARDREYQAIMPLKGKILNTWEVSSDEVLASQEVHDISVAIGIDPDSDDLSQLRYGKICILADADSDGLHIATLLCALFVKHFRALVKHGHVYVALPPLYRIDLGKEVYYALTEEEKEGVLEQLKRKKGKPNVQRFKGLGEMNPMQLRETTLDPNTRRLVQLTIDDEDDQRTDAMMDMLLAKKRSEDRRNWLQEKGDMAEIEV</sequence>
<organism>
    <name type="scientific">Escherichia coli (strain K12)</name>
    <dbReference type="NCBI Taxonomy" id="83333"/>
    <lineage>
        <taxon>Bacteria</taxon>
        <taxon>Pseudomonadati</taxon>
        <taxon>Pseudomonadota</taxon>
        <taxon>Gammaproteobacteria</taxon>
        <taxon>Enterobacterales</taxon>
        <taxon>Enterobacteriaceae</taxon>
        <taxon>Escherichia</taxon>
    </lineage>
</organism>
<gene>
    <name evidence="1" type="primary">parE</name>
    <name type="synonym">nfxD</name>
    <name type="ordered locus">b3030</name>
    <name type="ordered locus">JW2998</name>
</gene>
<feature type="chain" id="PRO_0000145427" description="DNA topoisomerase 4 subunit B">
    <location>
        <begin position="1"/>
        <end position="630"/>
    </location>
</feature>
<feature type="domain" description="Toprim" evidence="1">
    <location>
        <begin position="412"/>
        <end position="525"/>
    </location>
</feature>
<feature type="binding site" evidence="10">
    <location>
        <position position="5"/>
    </location>
    <ligand>
        <name>ATP</name>
        <dbReference type="ChEBI" id="CHEBI:30616"/>
    </ligand>
</feature>
<feature type="binding site" evidence="10">
    <location>
        <position position="42"/>
    </location>
    <ligand>
        <name>ATP</name>
        <dbReference type="ChEBI" id="CHEBI:30616"/>
    </ligand>
</feature>
<feature type="binding site" evidence="10">
    <location>
        <position position="69"/>
    </location>
    <ligand>
        <name>ATP</name>
        <dbReference type="ChEBI" id="CHEBI:30616"/>
    </ligand>
</feature>
<feature type="binding site" evidence="10">
    <location>
        <begin position="110"/>
        <end position="116"/>
    </location>
    <ligand>
        <name>ATP</name>
        <dbReference type="ChEBI" id="CHEBI:30616"/>
    </ligand>
</feature>
<feature type="binding site" evidence="10">
    <location>
        <position position="334"/>
    </location>
    <ligand>
        <name>ATP</name>
        <dbReference type="ChEBI" id="CHEBI:30616"/>
    </ligand>
</feature>
<feature type="binding site" evidence="1">
    <location>
        <position position="418"/>
    </location>
    <ligand>
        <name>Mg(2+)</name>
        <dbReference type="ChEBI" id="CHEBI:18420"/>
        <label>1</label>
        <note>catalytic</note>
    </ligand>
</feature>
<feature type="binding site" evidence="1">
    <location>
        <position position="490"/>
    </location>
    <ligand>
        <name>Mg(2+)</name>
        <dbReference type="ChEBI" id="CHEBI:18420"/>
        <label>1</label>
        <note>catalytic</note>
    </ligand>
</feature>
<feature type="binding site" evidence="1">
    <location>
        <position position="490"/>
    </location>
    <ligand>
        <name>Mg(2+)</name>
        <dbReference type="ChEBI" id="CHEBI:18420"/>
        <label>2</label>
    </ligand>
</feature>
<feature type="binding site" evidence="1">
    <location>
        <position position="492"/>
    </location>
    <ligand>
        <name>Mg(2+)</name>
        <dbReference type="ChEBI" id="CHEBI:18420"/>
        <label>2</label>
    </ligand>
</feature>
<feature type="site" description="Interaction with DNA" evidence="1">
    <location>
        <position position="443"/>
    </location>
</feature>
<feature type="site" description="Interaction with DNA" evidence="1">
    <location>
        <position position="446"/>
    </location>
</feature>
<feature type="site" description="Interaction with DNA" evidence="1">
    <location>
        <position position="497"/>
    </location>
</feature>
<feature type="site" description="Interaction with DNA" evidence="1">
    <location>
        <position position="615"/>
    </location>
</feature>
<feature type="sequence variant" description="In strain: DH161; quinolone-resistant." evidence="7">
    <original>L</original>
    <variation>H</variation>
    <location>
        <position position="445"/>
    </location>
</feature>
<feature type="helix" evidence="12">
    <location>
        <begin position="7"/>
        <end position="9"/>
    </location>
</feature>
<feature type="helix" evidence="13">
    <location>
        <begin position="17"/>
        <end position="21"/>
    </location>
</feature>
<feature type="helix" evidence="13">
    <location>
        <begin position="23"/>
        <end position="25"/>
    </location>
</feature>
<feature type="helix" evidence="13">
    <location>
        <begin position="33"/>
        <end position="48"/>
    </location>
</feature>
<feature type="strand" evidence="13">
    <location>
        <begin position="53"/>
        <end position="59"/>
    </location>
</feature>
<feature type="strand" evidence="13">
    <location>
        <begin position="65"/>
        <end position="69"/>
    </location>
</feature>
<feature type="turn" evidence="11">
    <location>
        <begin position="80"/>
        <end position="82"/>
    </location>
</feature>
<feature type="strand" evidence="13">
    <location>
        <begin position="83"/>
        <end position="85"/>
    </location>
</feature>
<feature type="helix" evidence="13">
    <location>
        <begin position="86"/>
        <end position="92"/>
    </location>
</feature>
<feature type="strand" evidence="12">
    <location>
        <begin position="96"/>
        <end position="98"/>
    </location>
</feature>
<feature type="strand" evidence="12">
    <location>
        <begin position="100"/>
        <end position="104"/>
    </location>
</feature>
<feature type="strand" evidence="14">
    <location>
        <begin position="106"/>
        <end position="108"/>
    </location>
</feature>
<feature type="helix" evidence="13">
    <location>
        <begin position="117"/>
        <end position="121"/>
    </location>
</feature>
<feature type="strand" evidence="13">
    <location>
        <begin position="123"/>
        <end position="132"/>
    </location>
</feature>
<feature type="strand" evidence="13">
    <location>
        <begin position="135"/>
        <end position="142"/>
    </location>
</feature>
<feature type="strand" evidence="13">
    <location>
        <begin position="145"/>
        <end position="155"/>
    </location>
</feature>
<feature type="strand" evidence="13">
    <location>
        <begin position="162"/>
        <end position="169"/>
    </location>
</feature>
<feature type="helix" evidence="13">
    <location>
        <begin position="171"/>
        <end position="173"/>
    </location>
</feature>
<feature type="helix" evidence="13">
    <location>
        <begin position="181"/>
        <end position="194"/>
    </location>
</feature>
<feature type="strand" evidence="13">
    <location>
        <begin position="199"/>
        <end position="204"/>
    </location>
</feature>
<feature type="turn" evidence="13">
    <location>
        <begin position="205"/>
        <end position="208"/>
    </location>
</feature>
<feature type="strand" evidence="13">
    <location>
        <begin position="209"/>
        <end position="213"/>
    </location>
</feature>
<feature type="helix" evidence="12">
    <location>
        <begin position="219"/>
        <end position="227"/>
    </location>
</feature>
<feature type="strand" evidence="12">
    <location>
        <begin position="233"/>
        <end position="243"/>
    </location>
</feature>
<feature type="strand" evidence="12">
    <location>
        <begin position="245"/>
        <end position="255"/>
    </location>
</feature>
<feature type="strand" evidence="12">
    <location>
        <begin position="264"/>
        <end position="268"/>
    </location>
</feature>
<feature type="helix" evidence="12">
    <location>
        <begin position="278"/>
        <end position="297"/>
    </location>
</feature>
<feature type="helix" evidence="12">
    <location>
        <begin position="309"/>
        <end position="313"/>
    </location>
</feature>
<feature type="strand" evidence="12">
    <location>
        <begin position="316"/>
        <end position="326"/>
    </location>
</feature>
<feature type="strand" evidence="12">
    <location>
        <begin position="329"/>
        <end position="331"/>
    </location>
</feature>
<feature type="helix" evidence="12">
    <location>
        <begin position="342"/>
        <end position="359"/>
    </location>
</feature>
<feature type="helix" evidence="12">
    <location>
        <begin position="362"/>
        <end position="382"/>
    </location>
</feature>
<protein>
    <recommendedName>
        <fullName evidence="1">DNA topoisomerase 4 subunit B</fullName>
        <ecNumber evidence="1 2 4">5.6.2.2</ecNumber>
    </recommendedName>
    <alternativeName>
        <fullName evidence="1">Topoisomerase IV subunit B</fullName>
    </alternativeName>
</protein>
<comment type="function">
    <text evidence="2 3 4 5 6 8">Topoisomerase IV is essential for chromosome segregation; it is the principal protein responsible for decatenating newly replicated chromosomes (PubMed:9334322). It relaxes supercoiled DNA (PubMed:15105144, PubMed:21300644, PubMed:23294697, PubMed:23352267). MukB stimulates the relaxation activity of topoisomerase IV and also has a modest effect on decatenation (PubMed:20921377).</text>
</comment>
<comment type="catalytic activity">
    <reaction evidence="1 2 4">
        <text>ATP-dependent breakage, passage and rejoining of double-stranded DNA.</text>
        <dbReference type="EC" id="5.6.2.2"/>
    </reaction>
</comment>
<comment type="cofactor">
    <cofactor evidence="1 4">
        <name>Mg(2+)</name>
        <dbReference type="ChEBI" id="CHEBI:18420"/>
    </cofactor>
    <cofactor evidence="1 4">
        <name>Mn(2+)</name>
        <dbReference type="ChEBI" id="CHEBI:29035"/>
    </cofactor>
    <cofactor evidence="1 4">
        <name>Ca(2+)</name>
        <dbReference type="ChEBI" id="CHEBI:29108"/>
    </cofactor>
    <text evidence="1 4">Binds two Mg(2+) per subunit. The magnesium ions form salt bridges with both the protein and the DNA. Can also accept other divalent metal cations, such as Mn(2+) or Ca(2+).</text>
</comment>
<comment type="activity regulation">
    <text evidence="5">Pyrrolopyrimidines inhibit both GyrB and its paralog in topoisomerase IV (parE) (PubMed:23294697).</text>
</comment>
<comment type="subunit">
    <text evidence="1 2 4">Heterotetramer composed of ParC and ParE.</text>
</comment>
<comment type="interaction">
    <interactant intactId="EBI-547277">
        <id>P20083</id>
    </interactant>
    <interactant intactId="EBI-544485">
        <id>P76015</id>
        <label>dhaK</label>
    </interactant>
    <organismsDiffer>false</organismsDiffer>
    <experiments>3</experiments>
</comment>
<comment type="similarity">
    <text evidence="1">Belongs to the type II topoisomerase family. ParE type 1 subfamily.</text>
</comment>
<comment type="sequence caution" evidence="9">
    <conflict type="frameshift">
        <sequence resource="EMBL-CDS" id="AAA24298"/>
    </conflict>
</comment>
<evidence type="ECO:0000255" key="1">
    <source>
        <dbReference type="HAMAP-Rule" id="MF_00938"/>
    </source>
</evidence>
<evidence type="ECO:0000269" key="2">
    <source>
    </source>
</evidence>
<evidence type="ECO:0000269" key="3">
    <source>
    </source>
</evidence>
<evidence type="ECO:0000269" key="4">
    <source>
    </source>
</evidence>
<evidence type="ECO:0000269" key="5">
    <source>
    </source>
</evidence>
<evidence type="ECO:0000269" key="6">
    <source>
    </source>
</evidence>
<evidence type="ECO:0000269" key="7">
    <source>
    </source>
</evidence>
<evidence type="ECO:0000269" key="8">
    <source>
    </source>
</evidence>
<evidence type="ECO:0000305" key="9"/>
<evidence type="ECO:0000305" key="10">
    <source>
    </source>
</evidence>
<evidence type="ECO:0007829" key="11">
    <source>
        <dbReference type="PDB" id="1S14"/>
    </source>
</evidence>
<evidence type="ECO:0007829" key="12">
    <source>
        <dbReference type="PDB" id="1S16"/>
    </source>
</evidence>
<evidence type="ECO:0007829" key="13">
    <source>
        <dbReference type="PDB" id="3FV5"/>
    </source>
</evidence>
<evidence type="ECO:0007829" key="14">
    <source>
        <dbReference type="PDB" id="4HZ0"/>
    </source>
</evidence>
<accession>P20083</accession>
<accession>Q2M9H0</accession>
<dbReference type="EC" id="5.6.2.2" evidence="1 2 4"/>
<dbReference type="EMBL" id="M58409">
    <property type="protein sequence ID" value="AAA24298.1"/>
    <property type="status" value="ALT_FRAME"/>
    <property type="molecule type" value="Genomic_DNA"/>
</dbReference>
<dbReference type="EMBL" id="U28377">
    <property type="protein sequence ID" value="AAA69198.1"/>
    <property type="molecule type" value="Genomic_DNA"/>
</dbReference>
<dbReference type="EMBL" id="U00096">
    <property type="protein sequence ID" value="AAC76066.1"/>
    <property type="molecule type" value="Genomic_DNA"/>
</dbReference>
<dbReference type="EMBL" id="AP009048">
    <property type="protein sequence ID" value="BAE77086.1"/>
    <property type="molecule type" value="Genomic_DNA"/>
</dbReference>
<dbReference type="EMBL" id="L22026">
    <property type="protein sequence ID" value="AAC36841.1"/>
    <property type="molecule type" value="Unassigned_DNA"/>
</dbReference>
<dbReference type="PIR" id="D65090">
    <property type="entry name" value="D65090"/>
</dbReference>
<dbReference type="RefSeq" id="NP_417502.1">
    <property type="nucleotide sequence ID" value="NC_000913.3"/>
</dbReference>
<dbReference type="RefSeq" id="WP_000195296.1">
    <property type="nucleotide sequence ID" value="NZ_SSUR01000002.1"/>
</dbReference>
<dbReference type="PDB" id="1S14">
    <property type="method" value="X-ray"/>
    <property type="resolution" value="2.00 A"/>
    <property type="chains" value="A/B=1-217"/>
</dbReference>
<dbReference type="PDB" id="1S16">
    <property type="method" value="X-ray"/>
    <property type="resolution" value="2.10 A"/>
    <property type="chains" value="A/B=1-390"/>
</dbReference>
<dbReference type="PDB" id="3FV5">
    <property type="method" value="X-ray"/>
    <property type="resolution" value="1.80 A"/>
    <property type="chains" value="A/B=15-215"/>
</dbReference>
<dbReference type="PDB" id="4HZ0">
    <property type="method" value="X-ray"/>
    <property type="resolution" value="2.20 A"/>
    <property type="chains" value="A/B=12-216"/>
</dbReference>
<dbReference type="PDBsum" id="1S14"/>
<dbReference type="PDBsum" id="1S16"/>
<dbReference type="PDBsum" id="3FV5"/>
<dbReference type="PDBsum" id="4HZ0"/>
<dbReference type="SMR" id="P20083"/>
<dbReference type="BioGRID" id="4262393">
    <property type="interactions" value="316"/>
</dbReference>
<dbReference type="BioGRID" id="851818">
    <property type="interactions" value="2"/>
</dbReference>
<dbReference type="ComplexPortal" id="CPX-1104">
    <property type="entry name" value="Topoisomerase IV"/>
</dbReference>
<dbReference type="DIP" id="DIP-10441N"/>
<dbReference type="FunCoup" id="P20083">
    <property type="interactions" value="214"/>
</dbReference>
<dbReference type="IntAct" id="P20083">
    <property type="interactions" value="25"/>
</dbReference>
<dbReference type="STRING" id="511145.b3030"/>
<dbReference type="BindingDB" id="P20083"/>
<dbReference type="ChEMBL" id="CHEMBL3329081"/>
<dbReference type="DrugBank" id="DB04395">
    <property type="generic name" value="Phosphoaminophosphonic Acid-Adenylate Ester"/>
</dbReference>
<dbReference type="DrugCentral" id="P20083"/>
<dbReference type="jPOST" id="P20083"/>
<dbReference type="PaxDb" id="511145-b3030"/>
<dbReference type="EnsemblBacteria" id="AAC76066">
    <property type="protein sequence ID" value="AAC76066"/>
    <property type="gene ID" value="b3030"/>
</dbReference>
<dbReference type="GeneID" id="93778963"/>
<dbReference type="GeneID" id="947501"/>
<dbReference type="KEGG" id="ecj:JW2998"/>
<dbReference type="KEGG" id="eco:b3030"/>
<dbReference type="KEGG" id="ecoc:C3026_16550"/>
<dbReference type="PATRIC" id="fig|1411691.4.peg.3701"/>
<dbReference type="EchoBASE" id="EB0681"/>
<dbReference type="eggNOG" id="COG0187">
    <property type="taxonomic scope" value="Bacteria"/>
</dbReference>
<dbReference type="HOGENOM" id="CLU_006146_4_1_6"/>
<dbReference type="InParanoid" id="P20083"/>
<dbReference type="OMA" id="NTWEVDG"/>
<dbReference type="OrthoDB" id="9802808at2"/>
<dbReference type="PhylomeDB" id="P20083"/>
<dbReference type="BioCyc" id="EcoCyc:EG10687-MONOMER"/>
<dbReference type="EvolutionaryTrace" id="P20083"/>
<dbReference type="PRO" id="PR:P20083"/>
<dbReference type="Proteomes" id="UP000000625">
    <property type="component" value="Chromosome"/>
</dbReference>
<dbReference type="GO" id="GO:0005694">
    <property type="term" value="C:chromosome"/>
    <property type="evidence" value="ECO:0007669"/>
    <property type="project" value="InterPro"/>
</dbReference>
<dbReference type="GO" id="GO:0005829">
    <property type="term" value="C:cytosol"/>
    <property type="evidence" value="ECO:0000314"/>
    <property type="project" value="EcoCyc"/>
</dbReference>
<dbReference type="GO" id="GO:0009330">
    <property type="term" value="C:DNA topoisomerase type II (double strand cut, ATP-hydrolyzing) complex"/>
    <property type="evidence" value="ECO:0000303"/>
    <property type="project" value="ComplexPortal"/>
</dbReference>
<dbReference type="GO" id="GO:0005524">
    <property type="term" value="F:ATP binding"/>
    <property type="evidence" value="ECO:0007669"/>
    <property type="project" value="UniProtKB-UniRule"/>
</dbReference>
<dbReference type="GO" id="GO:0003677">
    <property type="term" value="F:DNA binding"/>
    <property type="evidence" value="ECO:0007669"/>
    <property type="project" value="UniProtKB-UniRule"/>
</dbReference>
<dbReference type="GO" id="GO:0003918">
    <property type="term" value="F:DNA topoisomerase type II (double strand cut, ATP-hydrolyzing) activity"/>
    <property type="evidence" value="ECO:0000318"/>
    <property type="project" value="GO_Central"/>
</dbReference>
<dbReference type="GO" id="GO:0046872">
    <property type="term" value="F:metal ion binding"/>
    <property type="evidence" value="ECO:0007669"/>
    <property type="project" value="UniProtKB-KW"/>
</dbReference>
<dbReference type="GO" id="GO:0051276">
    <property type="term" value="P:chromosome organization"/>
    <property type="evidence" value="ECO:0000315"/>
    <property type="project" value="EcoliWiki"/>
</dbReference>
<dbReference type="GO" id="GO:0007059">
    <property type="term" value="P:chromosome segregation"/>
    <property type="evidence" value="ECO:0007669"/>
    <property type="project" value="UniProtKB-UniRule"/>
</dbReference>
<dbReference type="GO" id="GO:0006265">
    <property type="term" value="P:DNA topological change"/>
    <property type="evidence" value="ECO:0000318"/>
    <property type="project" value="GO_Central"/>
</dbReference>
<dbReference type="GO" id="GO:0030541">
    <property type="term" value="P:plasmid partitioning"/>
    <property type="evidence" value="ECO:0000314"/>
    <property type="project" value="EcoliWiki"/>
</dbReference>
<dbReference type="GO" id="GO:0046677">
    <property type="term" value="P:response to antibiotic"/>
    <property type="evidence" value="ECO:0007669"/>
    <property type="project" value="UniProtKB-KW"/>
</dbReference>
<dbReference type="GO" id="GO:0007062">
    <property type="term" value="P:sister chromatid cohesion"/>
    <property type="evidence" value="ECO:0000315"/>
    <property type="project" value="EcoliWiki"/>
</dbReference>
<dbReference type="CDD" id="cd16928">
    <property type="entry name" value="HATPase_GyrB-like"/>
    <property type="match status" value="1"/>
</dbReference>
<dbReference type="CDD" id="cd00822">
    <property type="entry name" value="TopoII_Trans_DNA_gyrase"/>
    <property type="match status" value="1"/>
</dbReference>
<dbReference type="FunFam" id="3.30.565.10:FF:000002">
    <property type="entry name" value="DNA gyrase subunit B"/>
    <property type="match status" value="1"/>
</dbReference>
<dbReference type="FunFam" id="3.30.230.10:FF:000012">
    <property type="entry name" value="DNA topoisomerase 4 subunit B"/>
    <property type="match status" value="1"/>
</dbReference>
<dbReference type="FunFam" id="3.40.50.670:FF:000003">
    <property type="entry name" value="DNA topoisomerase 4 subunit B"/>
    <property type="match status" value="1"/>
</dbReference>
<dbReference type="Gene3D" id="3.30.230.10">
    <property type="match status" value="1"/>
</dbReference>
<dbReference type="Gene3D" id="3.40.50.670">
    <property type="match status" value="1"/>
</dbReference>
<dbReference type="Gene3D" id="3.30.565.10">
    <property type="entry name" value="Histidine kinase-like ATPase, C-terminal domain"/>
    <property type="match status" value="1"/>
</dbReference>
<dbReference type="HAMAP" id="MF_00938">
    <property type="entry name" value="ParE_type1"/>
    <property type="match status" value="1"/>
</dbReference>
<dbReference type="InterPro" id="IPR002288">
    <property type="entry name" value="DNA_gyrase_B_C"/>
</dbReference>
<dbReference type="InterPro" id="IPR036890">
    <property type="entry name" value="HATPase_C_sf"/>
</dbReference>
<dbReference type="InterPro" id="IPR020568">
    <property type="entry name" value="Ribosomal_Su5_D2-typ_SF"/>
</dbReference>
<dbReference type="InterPro" id="IPR014721">
    <property type="entry name" value="Ribsml_uS5_D2-typ_fold_subgr"/>
</dbReference>
<dbReference type="InterPro" id="IPR001241">
    <property type="entry name" value="Topo_IIA"/>
</dbReference>
<dbReference type="InterPro" id="IPR013760">
    <property type="entry name" value="Topo_IIA-like_dom_sf"/>
</dbReference>
<dbReference type="InterPro" id="IPR013759">
    <property type="entry name" value="Topo_IIA_B_C"/>
</dbReference>
<dbReference type="InterPro" id="IPR013506">
    <property type="entry name" value="Topo_IIA_bsu_dom2"/>
</dbReference>
<dbReference type="InterPro" id="IPR018522">
    <property type="entry name" value="TopoIIA_CS"/>
</dbReference>
<dbReference type="InterPro" id="IPR005737">
    <property type="entry name" value="TopoIV_B_Gneg"/>
</dbReference>
<dbReference type="InterPro" id="IPR006171">
    <property type="entry name" value="TOPRIM_dom"/>
</dbReference>
<dbReference type="NCBIfam" id="TIGR01055">
    <property type="entry name" value="parE_Gneg"/>
    <property type="match status" value="1"/>
</dbReference>
<dbReference type="PANTHER" id="PTHR45866">
    <property type="entry name" value="DNA GYRASE/TOPOISOMERASE SUBUNIT B"/>
    <property type="match status" value="1"/>
</dbReference>
<dbReference type="PANTHER" id="PTHR45866:SF4">
    <property type="entry name" value="DNA TOPOISOMERASE 4 SUBUNIT B"/>
    <property type="match status" value="1"/>
</dbReference>
<dbReference type="Pfam" id="PF00204">
    <property type="entry name" value="DNA_gyraseB"/>
    <property type="match status" value="1"/>
</dbReference>
<dbReference type="Pfam" id="PF00986">
    <property type="entry name" value="DNA_gyraseB_C"/>
    <property type="match status" value="1"/>
</dbReference>
<dbReference type="Pfam" id="PF02518">
    <property type="entry name" value="HATPase_c"/>
    <property type="match status" value="1"/>
</dbReference>
<dbReference type="Pfam" id="PF01751">
    <property type="entry name" value="Toprim"/>
    <property type="match status" value="1"/>
</dbReference>
<dbReference type="PRINTS" id="PR01098">
    <property type="entry name" value="TOPISMRASE4B"/>
</dbReference>
<dbReference type="PRINTS" id="PR00418">
    <property type="entry name" value="TPI2FAMILY"/>
</dbReference>
<dbReference type="SMART" id="SM00387">
    <property type="entry name" value="HATPase_c"/>
    <property type="match status" value="1"/>
</dbReference>
<dbReference type="SMART" id="SM00433">
    <property type="entry name" value="TOP2c"/>
    <property type="match status" value="1"/>
</dbReference>
<dbReference type="SUPFAM" id="SSF55874">
    <property type="entry name" value="ATPase domain of HSP90 chaperone/DNA topoisomerase II/histidine kinase"/>
    <property type="match status" value="1"/>
</dbReference>
<dbReference type="SUPFAM" id="SSF54211">
    <property type="entry name" value="Ribosomal protein S5 domain 2-like"/>
    <property type="match status" value="1"/>
</dbReference>
<dbReference type="SUPFAM" id="SSF56719">
    <property type="entry name" value="Type II DNA topoisomerase"/>
    <property type="match status" value="1"/>
</dbReference>
<dbReference type="PROSITE" id="PS00177">
    <property type="entry name" value="TOPOISOMERASE_II"/>
    <property type="match status" value="1"/>
</dbReference>
<dbReference type="PROSITE" id="PS50880">
    <property type="entry name" value="TOPRIM"/>
    <property type="match status" value="1"/>
</dbReference>
<proteinExistence type="evidence at protein level"/>
<name>PARE_ECOLI</name>
<reference key="1">
    <citation type="journal article" date="1990" name="Cell">
        <title>New topoisomerase essential for chromosome segregation in E. coli.</title>
        <authorList>
            <person name="Kato J."/>
            <person name="Nishimura Y."/>
            <person name="Imamura R."/>
            <person name="Niki H."/>
            <person name="Hiraga S."/>
            <person name="Suzuki H."/>
        </authorList>
    </citation>
    <scope>NUCLEOTIDE SEQUENCE [GENOMIC DNA] OF 1-602</scope>
    <source>
        <strain>K12</strain>
    </source>
</reference>
<reference key="2">
    <citation type="journal article" date="1993" name="Nucleic Acids Res.">
        <title>Molecular characterization of the Salmonella typhimurium parE gene.</title>
        <authorList>
            <person name="Springer A.L."/>
            <person name="Schmid M.B."/>
        </authorList>
    </citation>
    <scope>SEQUENCE REVISION TO C-TERMINUS</scope>
</reference>
<reference key="3">
    <citation type="journal article" date="1997" name="Science">
        <title>The complete genome sequence of Escherichia coli K-12.</title>
        <authorList>
            <person name="Blattner F.R."/>
            <person name="Plunkett G. III"/>
            <person name="Bloch C.A."/>
            <person name="Perna N.T."/>
            <person name="Burland V."/>
            <person name="Riley M."/>
            <person name="Collado-Vides J."/>
            <person name="Glasner J.D."/>
            <person name="Rode C.K."/>
            <person name="Mayhew G.F."/>
            <person name="Gregor J."/>
            <person name="Davis N.W."/>
            <person name="Kirkpatrick H.A."/>
            <person name="Goeden M.A."/>
            <person name="Rose D.J."/>
            <person name="Mau B."/>
            <person name="Shao Y."/>
        </authorList>
    </citation>
    <scope>NUCLEOTIDE SEQUENCE [LARGE SCALE GENOMIC DNA]</scope>
    <source>
        <strain>K12 / MG1655 / ATCC 47076</strain>
    </source>
</reference>
<reference key="4">
    <citation type="journal article" date="2006" name="Mol. Syst. Biol.">
        <title>Highly accurate genome sequences of Escherichia coli K-12 strains MG1655 and W3110.</title>
        <authorList>
            <person name="Hayashi K."/>
            <person name="Morooka N."/>
            <person name="Yamamoto Y."/>
            <person name="Fujita K."/>
            <person name="Isono K."/>
            <person name="Choi S."/>
            <person name="Ohtsubo E."/>
            <person name="Baba T."/>
            <person name="Wanner B.L."/>
            <person name="Mori H."/>
            <person name="Horiuchi T."/>
        </authorList>
    </citation>
    <scope>NUCLEOTIDE SEQUENCE [LARGE SCALE GENOMIC DNA]</scope>
    <source>
        <strain>K12 / W3110 / ATCC 27325 / DSM 5911</strain>
    </source>
</reference>
<reference key="5">
    <citation type="journal article" date="1993" name="J. Biol. Chem.">
        <title>Escherichia coli topoisomerase IV. Purification, characterization, subunit structure, and subunit interactions.</title>
        <authorList>
            <person name="Peng H."/>
            <person name="Marians K.J."/>
        </authorList>
    </citation>
    <scope>NUCLEOTIDE SEQUENCE [GENOMIC DNA] OF 588-630</scope>
    <scope>CHARACTERIZATION</scope>
    <source>
        <strain>K12</strain>
    </source>
</reference>
<reference key="6">
    <citation type="journal article" date="1997" name="Genes Dev.">
        <title>Topoisomerase IV, not gyrase, decatenates products of site-specific recombination in Escherichia coli.</title>
        <authorList>
            <person name="Zechiedrich E.L."/>
            <person name="Khodursky A.B."/>
            <person name="Cozzarelli N.R."/>
        </authorList>
    </citation>
    <scope>FUNCTION</scope>
</reference>
<reference key="7">
    <citation type="journal article" date="2011" name="Nucleic Acids Res.">
        <title>Use of divalent metal ions in the DNA cleavage reaction of topoisomerase IV.</title>
        <authorList>
            <person name="Pitts S.L."/>
            <person name="Liou G.F."/>
            <person name="Mitchenall L.A."/>
            <person name="Burgin A.B."/>
            <person name="Maxwell A."/>
            <person name="Neuman K.C."/>
            <person name="Osheroff N."/>
        </authorList>
    </citation>
    <scope>FUNCTION</scope>
    <scope>SUBUNIT</scope>
    <scope>COFACTOR</scope>
    <scope>PUTATIVE METAL-BINDING SITES</scope>
    <scope>CATALYTIC ACTIVITY</scope>
</reference>
<reference key="8">
    <citation type="journal article" date="2004" name="Antimicrob. Agents Chemother.">
        <title>Crystal structures of Escherichia coli topoisomerase IV ParE subunit (24 and 43 kilodaltons): a single residue dictates differences in novobiocin potency against topoisomerase IV and DNA gyrase.</title>
        <authorList>
            <person name="Bellon S."/>
            <person name="Parsons J.D."/>
            <person name="Wei Y."/>
            <person name="Hayakawa K."/>
            <person name="Swenson L.L."/>
            <person name="Charifson P.S."/>
            <person name="Lippke J.A."/>
            <person name="Aldape R."/>
            <person name="Gross C.H."/>
        </authorList>
    </citation>
    <scope>X-RAY CRYSTALLOGRAPHY (2.0 ANGSTROMS) OF 1-390 IN COMPLEXES WITH NOVOBIOCIN AND ATP ANALOG</scope>
    <scope>CATALYTIC ACTIVITY</scope>
    <scope>FUNCTION</scope>
    <scope>SUBUNIT</scope>
</reference>
<reference key="9">
    <citation type="journal article" date="1997" name="Antimicrob. Agents Chemother.">
        <title>Quinolone resistance locus nfxD of Escherichia coli is a mutant allele of the parE gene encoding a subunit of topoisomerase IV.</title>
        <authorList>
            <person name="Breines D.M."/>
            <person name="Ouabdesselam S."/>
            <person name="Ng E.Y."/>
            <person name="Tankovic J."/>
            <person name="Shah S."/>
            <person name="Soussy C.J."/>
            <person name="Hooper D.C."/>
        </authorList>
    </citation>
    <scope>VARIANT QUINOLONE-RESISTANT HIS-445</scope>
</reference>
<reference key="10">
    <citation type="journal article" date="2010" name="Proc. Natl. Acad. Sci. U.S.A.">
        <title>Escherichia coli condensin MukB stimulates topoisomerase IV activity by a direct physical interaction.</title>
        <authorList>
            <person name="Li Y."/>
            <person name="Stewart N.K."/>
            <person name="Berger A.J."/>
            <person name="Vos S."/>
            <person name="Schoeffler A.J."/>
            <person name="Berger J.M."/>
            <person name="Chait B.T."/>
            <person name="Oakley M.G."/>
        </authorList>
    </citation>
    <scope>FUNCTION MODIFIED BY MUKB</scope>
</reference>
<reference key="11">
    <citation type="journal article" date="2013" name="Bioorg. Med. Chem. Lett.">
        <title>Pyrrolopyrimidine inhibitors of DNA gyrase B (GyrB) and topoisomerase IV (ParE), Part II: development of inhibitors with broad spectrum, Gram-negative antibacterial activity.</title>
        <authorList>
            <person name="Trzoss M."/>
            <person name="Bensen D.C."/>
            <person name="Li X."/>
            <person name="Chen Z."/>
            <person name="Lam T."/>
            <person name="Zhang J."/>
            <person name="Creighton C.J."/>
            <person name="Cunningham M.L."/>
            <person name="Kwan B."/>
            <person name="Stidham M."/>
            <person name="Nelson K."/>
            <person name="Brown-Driver V."/>
            <person name="Castellano A."/>
            <person name="Shaw K.J."/>
            <person name="Lightstone F.C."/>
            <person name="Wong S.E."/>
            <person name="Nguyen T.B."/>
            <person name="Finn J."/>
            <person name="Tari L.W."/>
        </authorList>
    </citation>
    <scope>FUNCTION</scope>
    <scope>ACTIVITY REGULATION</scope>
</reference>
<reference key="12">
    <citation type="journal article" date="2013" name="Bioorg. Med. Chem. Lett.">
        <title>Pyrrolopyrimidine inhibitors of DNA gyrase B (GyrB) and topoisomerase IV (ParE). Part I: Structure guided discovery and optimization of dual targeting agents with potent, broad-spectrum enzymatic activity.</title>
        <authorList>
            <person name="Tari L.W."/>
            <person name="Trzoss M."/>
            <person name="Bensen D.C."/>
            <person name="Li X."/>
            <person name="Chen Z."/>
            <person name="Lam T."/>
            <person name="Zhang J."/>
            <person name="Creighton C.J."/>
            <person name="Cunningham M.L."/>
            <person name="Kwan B."/>
            <person name="Stidham M."/>
            <person name="Shaw K.J."/>
            <person name="Lightstone F.C."/>
            <person name="Wong S.E."/>
            <person name="Nguyen T.B."/>
            <person name="Nix J."/>
            <person name="Finn J."/>
        </authorList>
    </citation>
    <scope>X-RAY CRYSTALLOGRAPHY (2.20 ANGSTROMS) OF 12-216 IN COMPLEX WITH INHIBITOR</scope>
    <scope>FUNCTION</scope>
    <scope>ACTIVITY REGULATION</scope>
</reference>
<keyword id="KW-0002">3D-structure</keyword>
<keyword id="KW-0046">Antibiotic resistance</keyword>
<keyword id="KW-0067">ATP-binding</keyword>
<keyword id="KW-0238">DNA-binding</keyword>
<keyword id="KW-0413">Isomerase</keyword>
<keyword id="KW-0460">Magnesium</keyword>
<keyword id="KW-0479">Metal-binding</keyword>
<keyword id="KW-0547">Nucleotide-binding</keyword>
<keyword id="KW-1185">Reference proteome</keyword>
<keyword id="KW-0799">Topoisomerase</keyword>